<dbReference type="EMBL" id="CP000087">
    <property type="protein sequence ID" value="ABE05487.1"/>
    <property type="molecule type" value="Genomic_DNA"/>
</dbReference>
<dbReference type="RefSeq" id="WP_011478056.1">
    <property type="nucleotide sequence ID" value="NC_007940.1"/>
</dbReference>
<dbReference type="SMR" id="Q1RGM7"/>
<dbReference type="KEGG" id="rbe:RBE_1406"/>
<dbReference type="eggNOG" id="COG0261">
    <property type="taxonomic scope" value="Bacteria"/>
</dbReference>
<dbReference type="HOGENOM" id="CLU_061463_3_2_5"/>
<dbReference type="OrthoDB" id="9813334at2"/>
<dbReference type="Proteomes" id="UP000001951">
    <property type="component" value="Chromosome"/>
</dbReference>
<dbReference type="GO" id="GO:0005737">
    <property type="term" value="C:cytoplasm"/>
    <property type="evidence" value="ECO:0007669"/>
    <property type="project" value="UniProtKB-ARBA"/>
</dbReference>
<dbReference type="GO" id="GO:1990904">
    <property type="term" value="C:ribonucleoprotein complex"/>
    <property type="evidence" value="ECO:0007669"/>
    <property type="project" value="UniProtKB-KW"/>
</dbReference>
<dbReference type="GO" id="GO:0005840">
    <property type="term" value="C:ribosome"/>
    <property type="evidence" value="ECO:0007669"/>
    <property type="project" value="UniProtKB-KW"/>
</dbReference>
<dbReference type="GO" id="GO:0019843">
    <property type="term" value="F:rRNA binding"/>
    <property type="evidence" value="ECO:0007669"/>
    <property type="project" value="UniProtKB-UniRule"/>
</dbReference>
<dbReference type="GO" id="GO:0003735">
    <property type="term" value="F:structural constituent of ribosome"/>
    <property type="evidence" value="ECO:0007669"/>
    <property type="project" value="InterPro"/>
</dbReference>
<dbReference type="GO" id="GO:0006412">
    <property type="term" value="P:translation"/>
    <property type="evidence" value="ECO:0007669"/>
    <property type="project" value="UniProtKB-UniRule"/>
</dbReference>
<dbReference type="HAMAP" id="MF_01363">
    <property type="entry name" value="Ribosomal_bL21"/>
    <property type="match status" value="1"/>
</dbReference>
<dbReference type="InterPro" id="IPR028909">
    <property type="entry name" value="bL21-like"/>
</dbReference>
<dbReference type="InterPro" id="IPR036164">
    <property type="entry name" value="bL21-like_sf"/>
</dbReference>
<dbReference type="InterPro" id="IPR001787">
    <property type="entry name" value="Ribosomal_bL21"/>
</dbReference>
<dbReference type="InterPro" id="IPR018258">
    <property type="entry name" value="Ribosomal_bL21_CS"/>
</dbReference>
<dbReference type="NCBIfam" id="TIGR00061">
    <property type="entry name" value="L21"/>
    <property type="match status" value="1"/>
</dbReference>
<dbReference type="PANTHER" id="PTHR21349">
    <property type="entry name" value="50S RIBOSOMAL PROTEIN L21"/>
    <property type="match status" value="1"/>
</dbReference>
<dbReference type="PANTHER" id="PTHR21349:SF0">
    <property type="entry name" value="LARGE RIBOSOMAL SUBUNIT PROTEIN BL21M"/>
    <property type="match status" value="1"/>
</dbReference>
<dbReference type="Pfam" id="PF00829">
    <property type="entry name" value="Ribosomal_L21p"/>
    <property type="match status" value="1"/>
</dbReference>
<dbReference type="SUPFAM" id="SSF141091">
    <property type="entry name" value="L21p-like"/>
    <property type="match status" value="1"/>
</dbReference>
<dbReference type="PROSITE" id="PS01169">
    <property type="entry name" value="RIBOSOMAL_L21"/>
    <property type="match status" value="1"/>
</dbReference>
<accession>Q1RGM7</accession>
<keyword id="KW-0687">Ribonucleoprotein</keyword>
<keyword id="KW-0689">Ribosomal protein</keyword>
<keyword id="KW-0694">RNA-binding</keyword>
<keyword id="KW-0699">rRNA-binding</keyword>
<protein>
    <recommendedName>
        <fullName evidence="1">Large ribosomal subunit protein bL21</fullName>
    </recommendedName>
    <alternativeName>
        <fullName evidence="2">50S ribosomal protein L21</fullName>
    </alternativeName>
</protein>
<comment type="function">
    <text evidence="1">This protein binds to 23S rRNA in the presence of protein L20.</text>
</comment>
<comment type="subunit">
    <text evidence="1">Part of the 50S ribosomal subunit. Contacts protein L20.</text>
</comment>
<comment type="similarity">
    <text evidence="1">Belongs to the bacterial ribosomal protein bL21 family.</text>
</comment>
<feature type="chain" id="PRO_0000270728" description="Large ribosomal subunit protein bL21">
    <location>
        <begin position="1"/>
        <end position="105"/>
    </location>
</feature>
<sequence length="105" mass="11973">MFAVIKAGGKQYKVDQNSVIKVEKIEGELGSKIQLNQVLMMGEYSKPSFIGTPLVKGAVVTAEITNQLRDNKIIVFKKKRRKNYRRKAGHRQELTELKILDITKQ</sequence>
<evidence type="ECO:0000255" key="1">
    <source>
        <dbReference type="HAMAP-Rule" id="MF_01363"/>
    </source>
</evidence>
<evidence type="ECO:0000305" key="2"/>
<name>RL21_RICBR</name>
<gene>
    <name evidence="1" type="primary">rplU</name>
    <name type="ordered locus">RBE_1406</name>
</gene>
<organism>
    <name type="scientific">Rickettsia bellii (strain RML369-C)</name>
    <dbReference type="NCBI Taxonomy" id="336407"/>
    <lineage>
        <taxon>Bacteria</taxon>
        <taxon>Pseudomonadati</taxon>
        <taxon>Pseudomonadota</taxon>
        <taxon>Alphaproteobacteria</taxon>
        <taxon>Rickettsiales</taxon>
        <taxon>Rickettsiaceae</taxon>
        <taxon>Rickettsieae</taxon>
        <taxon>Rickettsia</taxon>
        <taxon>belli group</taxon>
    </lineage>
</organism>
<proteinExistence type="inferred from homology"/>
<reference key="1">
    <citation type="journal article" date="2006" name="PLoS Genet.">
        <title>Genome sequence of Rickettsia bellii illuminates the role of amoebae in gene exchanges between intracellular pathogens.</title>
        <authorList>
            <person name="Ogata H."/>
            <person name="La Scola B."/>
            <person name="Audic S."/>
            <person name="Renesto P."/>
            <person name="Blanc G."/>
            <person name="Robert C."/>
            <person name="Fournier P.-E."/>
            <person name="Claverie J.-M."/>
            <person name="Raoult D."/>
        </authorList>
    </citation>
    <scope>NUCLEOTIDE SEQUENCE [LARGE SCALE GENOMIC DNA]</scope>
    <source>
        <strain>RML369-C</strain>
    </source>
</reference>